<dbReference type="EMBL" id="X59720">
    <property type="status" value="NOT_ANNOTATED_CDS"/>
    <property type="molecule type" value="Genomic_DNA"/>
</dbReference>
<dbReference type="EMBL" id="BK006937">
    <property type="protein sequence ID" value="DAA07427.1"/>
    <property type="molecule type" value="Genomic_DNA"/>
</dbReference>
<dbReference type="RefSeq" id="NP_001018031.2">
    <property type="nucleotide sequence ID" value="NM_001184528.1"/>
</dbReference>
<dbReference type="SMR" id="Q2V2Q1"/>
<dbReference type="BioGRID" id="37095">
    <property type="interactions" value="211"/>
</dbReference>
<dbReference type="FunCoup" id="Q2V2Q1">
    <property type="interactions" value="3"/>
</dbReference>
<dbReference type="STRING" id="4932.YCL058W-A"/>
<dbReference type="GlyGen" id="Q2V2Q1">
    <property type="glycosylation" value="3 sites, 1 O-linked glycan (3 sites)"/>
</dbReference>
<dbReference type="iPTMnet" id="Q2V2Q1"/>
<dbReference type="PaxDb" id="4932-YCL058W-A"/>
<dbReference type="PeptideAtlas" id="Q2V2Q1"/>
<dbReference type="EnsemblFungi" id="YCL058W-A_mRNA">
    <property type="protein sequence ID" value="YCL058W-A"/>
    <property type="gene ID" value="YCL058W-A"/>
</dbReference>
<dbReference type="GeneID" id="3289591"/>
<dbReference type="KEGG" id="sce:YCL058W-A"/>
<dbReference type="AGR" id="SGD:S000028518"/>
<dbReference type="SGD" id="S000028518">
    <property type="gene designation" value="ADF1"/>
</dbReference>
<dbReference type="VEuPathDB" id="FungiDB:YCL058W-A"/>
<dbReference type="eggNOG" id="ENOG502SFBX">
    <property type="taxonomic scope" value="Eukaryota"/>
</dbReference>
<dbReference type="HOGENOM" id="CLU_165604_1_0_1"/>
<dbReference type="InParanoid" id="Q2V2Q1"/>
<dbReference type="OMA" id="MGKCSMK"/>
<dbReference type="OrthoDB" id="4063321at2759"/>
<dbReference type="BioCyc" id="YEAST:G3O-29424-MONOMER"/>
<dbReference type="BioGRID-ORCS" id="3289591">
    <property type="hits" value="0 hits in 10 CRISPR screens"/>
</dbReference>
<dbReference type="PRO" id="PR:Q2V2Q1"/>
<dbReference type="Proteomes" id="UP000002311">
    <property type="component" value="Chromosome III"/>
</dbReference>
<dbReference type="RNAct" id="Q2V2Q1">
    <property type="molecule type" value="protein"/>
</dbReference>
<dbReference type="GO" id="GO:0005634">
    <property type="term" value="C:nucleus"/>
    <property type="evidence" value="ECO:0000314"/>
    <property type="project" value="SGD"/>
</dbReference>
<dbReference type="GO" id="GO:0000977">
    <property type="term" value="F:RNA polymerase II transcription regulatory region sequence-specific DNA binding"/>
    <property type="evidence" value="ECO:0000314"/>
    <property type="project" value="SGD"/>
</dbReference>
<dbReference type="GO" id="GO:0000122">
    <property type="term" value="P:negative regulation of transcription by RNA polymerase II"/>
    <property type="evidence" value="ECO:0000315"/>
    <property type="project" value="SGD"/>
</dbReference>
<dbReference type="GO" id="GO:0000750">
    <property type="term" value="P:pheromone-dependent signal transduction involved in conjugation with cellular fusion"/>
    <property type="evidence" value="ECO:0000315"/>
    <property type="project" value="SGD"/>
</dbReference>
<feature type="chain" id="PRO_0000248450" description="Antisense of depressing factor protein 1">
    <location>
        <begin position="1"/>
        <end position="113"/>
    </location>
</feature>
<feature type="region of interest" description="Disordered" evidence="1">
    <location>
        <begin position="1"/>
        <end position="35"/>
    </location>
</feature>
<feature type="compositionally biased region" description="Basic residues" evidence="1">
    <location>
        <begin position="1"/>
        <end position="11"/>
    </location>
</feature>
<evidence type="ECO:0000256" key="1">
    <source>
        <dbReference type="SAM" id="MobiDB-lite"/>
    </source>
</evidence>
<evidence type="ECO:0000269" key="2">
    <source>
    </source>
</evidence>
<evidence type="ECO:0000303" key="3">
    <source>
    </source>
</evidence>
<evidence type="ECO:0000305" key="4"/>
<evidence type="ECO:0000312" key="5">
    <source>
        <dbReference type="SGD" id="S000028518"/>
    </source>
</evidence>
<protein>
    <recommendedName>
        <fullName evidence="3">Antisense of depressing factor protein 1</fullName>
    </recommendedName>
</protein>
<comment type="function">
    <text evidence="2">Transcriptional repressor which negatively regulates transcription of FYV5 by binding to the promoter on the sense strand.</text>
</comment>
<comment type="subcellular location">
    <subcellularLocation>
        <location evidence="2">Nucleus</location>
    </subcellularLocation>
</comment>
<comment type="miscellaneous">
    <text>Encoded by the antisense strand of the FYV5 gene.</text>
</comment>
<comment type="similarity">
    <text evidence="4">Belongs to the ADF1 family.</text>
</comment>
<reference key="1">
    <citation type="journal article" date="1992" name="Nature">
        <title>The complete DNA sequence of yeast chromosome III.</title>
        <authorList>
            <person name="Oliver S.G."/>
            <person name="van der Aart Q.J.M."/>
            <person name="Agostoni-Carbone M.L."/>
            <person name="Aigle M."/>
            <person name="Alberghina L."/>
            <person name="Alexandraki D."/>
            <person name="Antoine G."/>
            <person name="Anwar R."/>
            <person name="Ballesta J.P.G."/>
            <person name="Benit P."/>
            <person name="Berben G."/>
            <person name="Bergantino E."/>
            <person name="Biteau N."/>
            <person name="Bolle P.-A."/>
            <person name="Bolotin-Fukuhara M."/>
            <person name="Brown A."/>
            <person name="Brown A.J.P."/>
            <person name="Buhler J.-M."/>
            <person name="Carcano C."/>
            <person name="Carignani G."/>
            <person name="Cederberg H."/>
            <person name="Chanet R."/>
            <person name="Contreras R."/>
            <person name="Crouzet M."/>
            <person name="Daignan-Fornier B."/>
            <person name="Defoor E."/>
            <person name="Delgado M.D."/>
            <person name="Demolder J."/>
            <person name="Doira C."/>
            <person name="Dubois E."/>
            <person name="Dujon B."/>
            <person name="Duesterhoeft A."/>
            <person name="Erdmann D."/>
            <person name="Esteban M."/>
            <person name="Fabre F."/>
            <person name="Fairhead C."/>
            <person name="Faye G."/>
            <person name="Feldmann H."/>
            <person name="Fiers W."/>
            <person name="Francingues-Gaillard M.-C."/>
            <person name="Franco L."/>
            <person name="Frontali L."/>
            <person name="Fukuhara H."/>
            <person name="Fuller L.J."/>
            <person name="Galland P."/>
            <person name="Gent M.E."/>
            <person name="Gigot D."/>
            <person name="Gilliquet V."/>
            <person name="Glansdorff N."/>
            <person name="Goffeau A."/>
            <person name="Grenson M."/>
            <person name="Grisanti P."/>
            <person name="Grivell L.A."/>
            <person name="de Haan M."/>
            <person name="Haasemann M."/>
            <person name="Hatat D."/>
            <person name="Hoenicka J."/>
            <person name="Hegemann J.H."/>
            <person name="Herbert C.J."/>
            <person name="Hilger F."/>
            <person name="Hohmann S."/>
            <person name="Hollenberg C.P."/>
            <person name="Huse K."/>
            <person name="Iborra F."/>
            <person name="Indge K.J."/>
            <person name="Isono K."/>
            <person name="Jacq C."/>
            <person name="Jacquet M."/>
            <person name="James C.M."/>
            <person name="Jauniaux J.-C."/>
            <person name="Jia Y."/>
            <person name="Jimenez A."/>
            <person name="Kelly A."/>
            <person name="Kleinhans U."/>
            <person name="Kreisl P."/>
            <person name="Lanfranchi G."/>
            <person name="Lewis C."/>
            <person name="van der Linden C.G."/>
            <person name="Lucchini G."/>
            <person name="Lutzenkirchen K."/>
            <person name="Maat M.J."/>
            <person name="Mallet L."/>
            <person name="Mannhaupt G."/>
            <person name="Martegani E."/>
            <person name="Mathieu A."/>
            <person name="Maurer C.T.C."/>
            <person name="McConnell D."/>
            <person name="McKee R.A."/>
            <person name="Messenguy F."/>
            <person name="Mewes H.-W."/>
            <person name="Molemans F."/>
            <person name="Montague M.A."/>
            <person name="Muzi Falconi M."/>
            <person name="Navas L."/>
            <person name="Newlon C.S."/>
            <person name="Noone D."/>
            <person name="Pallier C."/>
            <person name="Panzeri L."/>
            <person name="Pearson B.M."/>
            <person name="Perea J."/>
            <person name="Philippsen P."/>
            <person name="Pierard A."/>
            <person name="Planta R.J."/>
            <person name="Plevani P."/>
            <person name="Poetsch B."/>
            <person name="Pohl F.M."/>
            <person name="Purnelle B."/>
            <person name="Ramezani Rad M."/>
            <person name="Rasmussen S.W."/>
            <person name="Raynal A."/>
            <person name="Remacha M.A."/>
            <person name="Richterich P."/>
            <person name="Roberts A.B."/>
            <person name="Rodriguez F."/>
            <person name="Sanz E."/>
            <person name="Schaaff-Gerstenschlaeger I."/>
            <person name="Scherens B."/>
            <person name="Schweitzer B."/>
            <person name="Shu Y."/>
            <person name="Skala J."/>
            <person name="Slonimski P.P."/>
            <person name="Sor F."/>
            <person name="Soustelle C."/>
            <person name="Spiegelberg R."/>
            <person name="Stateva L.I."/>
            <person name="Steensma H.Y."/>
            <person name="Steiner S."/>
            <person name="Thierry A."/>
            <person name="Thireos G."/>
            <person name="Tzermia M."/>
            <person name="Urrestarazu L.A."/>
            <person name="Valle G."/>
            <person name="Vetter I."/>
            <person name="van Vliet-Reedijk J.C."/>
            <person name="Voet M."/>
            <person name="Volckaert G."/>
            <person name="Vreken P."/>
            <person name="Wang H."/>
            <person name="Warmington J.R."/>
            <person name="von Wettstein D."/>
            <person name="Wicksteed B.L."/>
            <person name="Wilson C."/>
            <person name="Wurst H."/>
            <person name="Xu G."/>
            <person name="Yoshikawa A."/>
            <person name="Zimmermann F.K."/>
            <person name="Sgouros J.G."/>
        </authorList>
    </citation>
    <scope>NUCLEOTIDE SEQUENCE [LARGE SCALE GENOMIC DNA]</scope>
    <source>
        <strain>ATCC 204508 / S288c</strain>
    </source>
</reference>
<reference key="2">
    <citation type="journal article" date="2014" name="G3 (Bethesda)">
        <title>The reference genome sequence of Saccharomyces cerevisiae: Then and now.</title>
        <authorList>
            <person name="Engel S.R."/>
            <person name="Dietrich F.S."/>
            <person name="Fisk D.G."/>
            <person name="Binkley G."/>
            <person name="Balakrishnan R."/>
            <person name="Costanzo M.C."/>
            <person name="Dwight S.S."/>
            <person name="Hitz B.C."/>
            <person name="Karra K."/>
            <person name="Nash R.S."/>
            <person name="Weng S."/>
            <person name="Wong E.D."/>
            <person name="Lloyd P."/>
            <person name="Skrzypek M.S."/>
            <person name="Miyasato S.R."/>
            <person name="Simison M."/>
            <person name="Cherry J.M."/>
        </authorList>
    </citation>
    <scope>GENOME REANNOTATION</scope>
    <source>
        <strain>ATCC 204508 / S288c</strain>
    </source>
</reference>
<reference key="3">
    <citation type="journal article" date="2003" name="Genome Biol.">
        <title>Reinvestigation of the Saccharomyces cerevisiae genome annotation by comparison to the genome of a related fungus: Ashbya gossypii.</title>
        <authorList>
            <person name="Brachat S."/>
            <person name="Dietrich F.S."/>
            <person name="Voegeli S."/>
            <person name="Zhang Z."/>
            <person name="Stuart L."/>
            <person name="Lerch A."/>
            <person name="Gates K."/>
            <person name="Gaffney T.D."/>
            <person name="Philippsen P."/>
        </authorList>
    </citation>
    <scope>GENOME REANNOTATION</scope>
</reference>
<reference key="4">
    <citation type="journal article" date="2003" name="Nature">
        <title>Sequencing and comparison of yeast species to identify genes and regulatory elements.</title>
        <authorList>
            <person name="Kellis M."/>
            <person name="Patterson N."/>
            <person name="Endrizzi M."/>
            <person name="Birren B.W."/>
            <person name="Lander E.S."/>
        </authorList>
    </citation>
    <scope>IDENTIFICATION OF PROBABLE INITIATION SITE</scope>
</reference>
<reference key="5">
    <citation type="journal article" date="2010" name="Cell Res.">
        <title>A de novo originated gene depresses budding yeast mating pathway and is repressed by the protein encoded by its antisense strand.</title>
        <authorList>
            <person name="Li D."/>
            <person name="Dong Y."/>
            <person name="Jiang Y."/>
            <person name="Jiang H."/>
            <person name="Cai J."/>
            <person name="Wang W."/>
        </authorList>
    </citation>
    <scope>FUNCTION</scope>
    <scope>SUBCELLULAR LOCATION</scope>
</reference>
<reference key="6">
    <citation type="journal article" date="2018" name="J. Proteome Res.">
        <title>Enrichment-based proteogenomics identifies microproteins, missing proteins, and novel smORFs in Saccharomyces cerevisiae.</title>
        <authorList>
            <person name="He C."/>
            <person name="Jia C."/>
            <person name="Zhang Y."/>
            <person name="Xu P."/>
        </authorList>
    </citation>
    <scope>IDENTIFICATION BY MASS SPECTROMETRY</scope>
</reference>
<sequence length="113" mass="12739">MGKCSMKKKGVGKNVGVGKKVQKKRSISTAERKRTKLQVEKLNKSSETMIPTLLREASTQEPAKLKAETTLKAEELIKDQEKDSKVREQIRTEKSKTNDSMLKQIEMISGFSL</sequence>
<proteinExistence type="evidence at protein level"/>
<keyword id="KW-0539">Nucleus</keyword>
<keyword id="KW-1185">Reference proteome</keyword>
<keyword id="KW-0804">Transcription</keyword>
<keyword id="KW-0805">Transcription regulation</keyword>
<name>ADF1_YEAST</name>
<organism>
    <name type="scientific">Saccharomyces cerevisiae (strain ATCC 204508 / S288c)</name>
    <name type="common">Baker's yeast</name>
    <dbReference type="NCBI Taxonomy" id="559292"/>
    <lineage>
        <taxon>Eukaryota</taxon>
        <taxon>Fungi</taxon>
        <taxon>Dikarya</taxon>
        <taxon>Ascomycota</taxon>
        <taxon>Saccharomycotina</taxon>
        <taxon>Saccharomycetes</taxon>
        <taxon>Saccharomycetales</taxon>
        <taxon>Saccharomycetaceae</taxon>
        <taxon>Saccharomyces</taxon>
    </lineage>
</organism>
<accession>Q2V2Q1</accession>
<accession>D6VQV8</accession>
<gene>
    <name evidence="3" type="primary">ADF1</name>
    <name evidence="5" type="ordered locus">YCL058W-A</name>
</gene>